<gene>
    <name type="primary">bla</name>
    <name type="synonym">far1</name>
    <name type="ordered locus">NFA_23080</name>
</gene>
<comment type="function">
    <text>Confers high levels of resistance to amoxicillin, benzylpenicillin, piperacillin, ticarcillin and cephalothin. Also hydrolyzes aztreonam at a low level. Not active against ceftazidime, cefotaxime and imipenem.</text>
</comment>
<comment type="catalytic activity">
    <reaction evidence="4">
        <text>a beta-lactam + H2O = a substituted beta-amino acid</text>
        <dbReference type="Rhea" id="RHEA:20401"/>
        <dbReference type="ChEBI" id="CHEBI:15377"/>
        <dbReference type="ChEBI" id="CHEBI:35627"/>
        <dbReference type="ChEBI" id="CHEBI:140347"/>
        <dbReference type="EC" id="3.5.2.6"/>
    </reaction>
</comment>
<comment type="activity regulation">
    <text evidence="5">Inhibited by clavulanic acid, and at a low level by tazobactam and sulbactam.</text>
</comment>
<comment type="biophysicochemical properties">
    <kinetics>
        <KM evidence="5">30 uM for benzylpenicillin</KM>
        <KM evidence="5">50 uM for amoxicillin</KM>
        <KM evidence="5">31 uM for ticarcillin</KM>
        <KM evidence="5">45 uM for piperacillin</KM>
        <KM evidence="5">104 uM for cephalothin</KM>
        <KM evidence="5">400 uM for aztreonam</KM>
        <Vmax evidence="5">5.5 umol/sec/mg enzyme with benzylpenicillin as substrate</Vmax>
        <Vmax evidence="5">3.8 umol/sec/mg enzyme with amoxicillin as substrate</Vmax>
        <Vmax evidence="5">1.6 umol/sec/mg enzyme with ticarcillin as substrate</Vmax>
        <Vmax evidence="5">9.2 umol/sec/mg enzyme with piperacillin as substrate</Vmax>
        <Vmax evidence="5">0.13 umol/sec/mg enzyme with cephalothin as substrate</Vmax>
    </kinetics>
</comment>
<comment type="subcellular location">
    <subcellularLocation>
        <location evidence="6">Cell membrane</location>
        <topology evidence="6">Lipid-anchor</topology>
    </subcellularLocation>
</comment>
<comment type="miscellaneous">
    <text evidence="7">The class A beta-lactamase family has a specific amino-acid numbering system, sometimes called Ambler or ABL numbering and often misspelt as Amber. A multiple sequence alignment was used to derive a consensus sequence and then the consensus was numbered taking into account insertions and deletions. This allows use of identical numbers, e.g. for active site residues, despite differences in protein length. UniProt always uses natural numbering of residues, hence there appear to be differences in numbering between this entry and some papers.</text>
</comment>
<comment type="similarity">
    <text evidence="6">Belongs to the class-A beta-lactamase family.</text>
</comment>
<comment type="sequence caution" evidence="6">
    <conflict type="frameshift">
        <sequence resource="EMBL-CDS" id="AAB81957"/>
    </conflict>
</comment>
<comment type="sequence caution" evidence="6">
    <conflict type="erroneous initiation">
        <sequence resource="EMBL-CDS" id="BAD57155"/>
    </conflict>
</comment>
<evidence type="ECO:0000250" key="1"/>
<evidence type="ECO:0000250" key="2">
    <source>
        <dbReference type="UniProtKB" id="P9WKD3"/>
    </source>
</evidence>
<evidence type="ECO:0000255" key="3"/>
<evidence type="ECO:0000255" key="4">
    <source>
        <dbReference type="PROSITE-ProRule" id="PRU10101"/>
    </source>
</evidence>
<evidence type="ECO:0000269" key="5">
    <source>
    </source>
</evidence>
<evidence type="ECO:0000305" key="6"/>
<evidence type="ECO:0000305" key="7">
    <source>
    </source>
</evidence>
<name>BLAC_NOCFA</name>
<dbReference type="EC" id="3.5.2.6"/>
<dbReference type="EMBL" id="AF024601">
    <property type="protein sequence ID" value="AAB81957.1"/>
    <property type="status" value="ALT_FRAME"/>
    <property type="molecule type" value="Genomic_DNA"/>
</dbReference>
<dbReference type="EMBL" id="AP006618">
    <property type="protein sequence ID" value="BAD57155.1"/>
    <property type="status" value="ALT_INIT"/>
    <property type="molecule type" value="Genomic_DNA"/>
</dbReference>
<dbReference type="RefSeq" id="WP_041560070.1">
    <property type="nucleotide sequence ID" value="NC_006361.1"/>
</dbReference>
<dbReference type="SMR" id="Q5YXD6"/>
<dbReference type="STRING" id="247156.NFA_23080"/>
<dbReference type="GeneID" id="61133068"/>
<dbReference type="KEGG" id="nfa:NFA_23080"/>
<dbReference type="eggNOG" id="COG2367">
    <property type="taxonomic scope" value="Bacteria"/>
</dbReference>
<dbReference type="HOGENOM" id="CLU_031960_6_0_11"/>
<dbReference type="SABIO-RK" id="Q5YXD6"/>
<dbReference type="Proteomes" id="UP000006820">
    <property type="component" value="Chromosome"/>
</dbReference>
<dbReference type="GO" id="GO:0005886">
    <property type="term" value="C:plasma membrane"/>
    <property type="evidence" value="ECO:0007669"/>
    <property type="project" value="UniProtKB-SubCell"/>
</dbReference>
<dbReference type="GO" id="GO:0008800">
    <property type="term" value="F:beta-lactamase activity"/>
    <property type="evidence" value="ECO:0007669"/>
    <property type="project" value="UniProtKB-EC"/>
</dbReference>
<dbReference type="GO" id="GO:0030655">
    <property type="term" value="P:beta-lactam antibiotic catabolic process"/>
    <property type="evidence" value="ECO:0007669"/>
    <property type="project" value="InterPro"/>
</dbReference>
<dbReference type="GO" id="GO:0046677">
    <property type="term" value="P:response to antibiotic"/>
    <property type="evidence" value="ECO:0007669"/>
    <property type="project" value="UniProtKB-KW"/>
</dbReference>
<dbReference type="Gene3D" id="3.40.710.10">
    <property type="entry name" value="DD-peptidase/beta-lactamase superfamily"/>
    <property type="match status" value="1"/>
</dbReference>
<dbReference type="InterPro" id="IPR012338">
    <property type="entry name" value="Beta-lactam/transpept-like"/>
</dbReference>
<dbReference type="InterPro" id="IPR045155">
    <property type="entry name" value="Beta-lactam_cat"/>
</dbReference>
<dbReference type="InterPro" id="IPR000871">
    <property type="entry name" value="Beta-lactam_class-A"/>
</dbReference>
<dbReference type="InterPro" id="IPR023650">
    <property type="entry name" value="Beta-lactam_class-A_AS"/>
</dbReference>
<dbReference type="NCBIfam" id="NF033103">
    <property type="entry name" value="bla_class_A"/>
    <property type="match status" value="1"/>
</dbReference>
<dbReference type="PANTHER" id="PTHR35333">
    <property type="entry name" value="BETA-LACTAMASE"/>
    <property type="match status" value="1"/>
</dbReference>
<dbReference type="PANTHER" id="PTHR35333:SF3">
    <property type="entry name" value="BETA-LACTAMASE-TYPE TRANSPEPTIDASE FOLD CONTAINING PROTEIN"/>
    <property type="match status" value="1"/>
</dbReference>
<dbReference type="Pfam" id="PF13354">
    <property type="entry name" value="Beta-lactamase2"/>
    <property type="match status" value="1"/>
</dbReference>
<dbReference type="PRINTS" id="PR00118">
    <property type="entry name" value="BLACTAMASEA"/>
</dbReference>
<dbReference type="SUPFAM" id="SSF56601">
    <property type="entry name" value="beta-lactamase/transpeptidase-like"/>
    <property type="match status" value="1"/>
</dbReference>
<dbReference type="PROSITE" id="PS00146">
    <property type="entry name" value="BETA_LACTAMASE_A"/>
    <property type="match status" value="1"/>
</dbReference>
<protein>
    <recommendedName>
        <fullName>Beta-lactamase FAR-1</fullName>
        <ecNumber>3.5.2.6</ecNumber>
    </recommendedName>
</protein>
<accession>Q5YXD6</accession>
<accession>O30987</accession>
<feature type="signal peptide" evidence="3">
    <location>
        <begin position="1"/>
        <end position="28"/>
    </location>
</feature>
<feature type="chain" id="PRO_0000313798" description="Beta-lactamase FAR-1">
    <location>
        <begin position="29"/>
        <end position="313"/>
    </location>
</feature>
<feature type="active site" description="Acyl-ester intermediate" evidence="2">
    <location>
        <position position="94"/>
    </location>
</feature>
<feature type="active site" description="Proton acceptor" evidence="2">
    <location>
        <position position="190"/>
    </location>
</feature>
<feature type="binding site" evidence="2">
    <location>
        <position position="154"/>
    </location>
    <ligand>
        <name>substrate</name>
    </ligand>
</feature>
<feature type="binding site" evidence="1">
    <location>
        <begin position="258"/>
        <end position="260"/>
    </location>
    <ligand>
        <name>substrate</name>
    </ligand>
</feature>
<feature type="site" description="Increases nucleophilicity of active site Ser" evidence="2">
    <location>
        <position position="97"/>
    </location>
</feature>
<feature type="lipid moiety-binding region" description="N-palmitoyl cysteine" evidence="3">
    <location>
        <position position="29"/>
    </location>
</feature>
<feature type="lipid moiety-binding region" description="S-diacylglycerol cysteine" evidence="3">
    <location>
        <position position="29"/>
    </location>
</feature>
<feature type="sequence conflict" description="In Ref. 1; AAB81957." evidence="6" ref="1">
    <original>V</original>
    <variation>A</variation>
    <location>
        <position position="22"/>
    </location>
</feature>
<feature type="sequence conflict" description="In Ref. 1; AAB81957." evidence="6" ref="1">
    <original>A</original>
    <variation>T</variation>
    <location>
        <position position="49"/>
    </location>
</feature>
<feature type="sequence conflict" description="In Ref. 1; AAB81957." evidence="6" ref="1">
    <original>F</original>
    <variation>S</variation>
    <location>
        <position position="65"/>
    </location>
</feature>
<feature type="sequence conflict" description="In Ref. 1; AAB81957." evidence="6" ref="1">
    <original>V</original>
    <variation>E</variation>
    <location>
        <position position="81"/>
    </location>
</feature>
<proteinExistence type="evidence at protein level"/>
<organism>
    <name type="scientific">Nocardia farcinica (strain IFM 10152)</name>
    <dbReference type="NCBI Taxonomy" id="247156"/>
    <lineage>
        <taxon>Bacteria</taxon>
        <taxon>Bacillati</taxon>
        <taxon>Actinomycetota</taxon>
        <taxon>Actinomycetes</taxon>
        <taxon>Mycobacteriales</taxon>
        <taxon>Nocardiaceae</taxon>
        <taxon>Nocardia</taxon>
    </lineage>
</organism>
<sequence>MPGVDISFLKKSGRRTMAAAAVIALLGGCGADAGSEPATTAASTTAPSAATDAATAEFAALEQRFGARLGVYAVDTTSGAVVAYRADERFGMASTFKGLACGALLREHPLSSGYFDQVVRYSREEVVSYSPVTETRVDTGMTVAELCHATITVSDNTAGNQILKLLGGPAGFTAFLRSLGDEVSRLDRWETELNEVPPGEERDTTTPAAVAANYRALVLGDVLAEPERAQLRDWLVANTTGDQRIRAGVPAGWTVGDKTGGGSHGGNNDVAVAWTETGDPIVIALLSHRTDPAAKADNALLAEATRAVVTALR</sequence>
<reference key="1">
    <citation type="journal article" date="1999" name="Antimicrob. Agents Chemother.">
        <title>Biochemical-genetic analysis and distribution of FAR-1, a class A beta-lactamase from Nocardia farcinica.</title>
        <authorList>
            <person name="Laurent F."/>
            <person name="Poirel L."/>
            <person name="Naas T."/>
            <person name="Chaibi E.B."/>
            <person name="Labia R."/>
            <person name="Boiron P."/>
            <person name="Nordmann P."/>
        </authorList>
    </citation>
    <scope>NUCLEOTIDE SEQUENCE [GENOMIC DNA]</scope>
    <scope>ACTIVITY REGULATION</scope>
    <scope>BIOPHYSICOCHEMICAL PROPERTIES</scope>
    <source>
        <strain>VIC</strain>
    </source>
</reference>
<reference key="2">
    <citation type="journal article" date="2004" name="Proc. Natl. Acad. Sci. U.S.A.">
        <title>The complete genomic sequence of Nocardia farcinica IFM 10152.</title>
        <authorList>
            <person name="Ishikawa J."/>
            <person name="Yamashita A."/>
            <person name="Mikami Y."/>
            <person name="Hoshino Y."/>
            <person name="Kurita H."/>
            <person name="Hotta K."/>
            <person name="Shiba T."/>
            <person name="Hattori M."/>
        </authorList>
    </citation>
    <scope>NUCLEOTIDE SEQUENCE [LARGE SCALE GENOMIC DNA]</scope>
    <source>
        <strain>IFM 10152</strain>
    </source>
</reference>
<reference key="3">
    <citation type="journal article" date="1991" name="Biochem. J.">
        <title>A standard numbering scheme for the class A beta-lactamases.</title>
        <authorList>
            <person name="Ambler R.P."/>
            <person name="Coulson A.F."/>
            <person name="Frere J.M."/>
            <person name="Ghuysen J.M."/>
            <person name="Joris B."/>
            <person name="Forsman M."/>
            <person name="Levesque R.C."/>
            <person name="Tiraby G."/>
            <person name="Waley S.G."/>
        </authorList>
    </citation>
    <scope>AMINO ACID NUMBERING SCHEME</scope>
</reference>
<reference key="4">
    <citation type="journal article" date="1993" name="Antimicrob. Agents Chemother.">
        <title>Partial characterization of Nocardia farcinica beta-lactamases.</title>
        <authorList>
            <person name="Steingrube V.A."/>
            <person name="Wallace R.J."/>
            <person name="Brown B.A."/>
            <person name="Zhang Y."/>
            <person name="Steele L.C."/>
            <person name="Young G."/>
            <person name="Nash D.R."/>
        </authorList>
    </citation>
    <scope>EVIDENCE OF MEMBRANE-BOUND LOCALIZATION</scope>
</reference>
<keyword id="KW-0046">Antibiotic resistance</keyword>
<keyword id="KW-1003">Cell membrane</keyword>
<keyword id="KW-0378">Hydrolase</keyword>
<keyword id="KW-0449">Lipoprotein</keyword>
<keyword id="KW-0472">Membrane</keyword>
<keyword id="KW-0564">Palmitate</keyword>
<keyword id="KW-1185">Reference proteome</keyword>
<keyword id="KW-0732">Signal</keyword>